<organism>
    <name type="scientific">Staphylococcus epidermidis (strain ATCC 35984 / DSM 28319 / BCRC 17069 / CCUG 31568 / BM 3577 / RP62A)</name>
    <dbReference type="NCBI Taxonomy" id="176279"/>
    <lineage>
        <taxon>Bacteria</taxon>
        <taxon>Bacillati</taxon>
        <taxon>Bacillota</taxon>
        <taxon>Bacilli</taxon>
        <taxon>Bacillales</taxon>
        <taxon>Staphylococcaceae</taxon>
        <taxon>Staphylococcus</taxon>
    </lineage>
</organism>
<evidence type="ECO:0000255" key="1">
    <source>
        <dbReference type="HAMAP-Rule" id="MF_01371"/>
    </source>
</evidence>
<evidence type="ECO:0000305" key="2"/>
<accession>Q5HM17</accession>
<feature type="chain" id="PRO_0000104613" description="Large ribosomal subunit protein uL30">
    <location>
        <begin position="1"/>
        <end position="60"/>
    </location>
</feature>
<comment type="subunit">
    <text evidence="1">Part of the 50S ribosomal subunit.</text>
</comment>
<comment type="similarity">
    <text evidence="1">Belongs to the universal ribosomal protein uL30 family.</text>
</comment>
<dbReference type="EMBL" id="CP000029">
    <property type="protein sequence ID" value="AAW55137.1"/>
    <property type="molecule type" value="Genomic_DNA"/>
</dbReference>
<dbReference type="RefSeq" id="WP_001829711.1">
    <property type="nucleotide sequence ID" value="NC_002976.3"/>
</dbReference>
<dbReference type="SMR" id="Q5HM17"/>
<dbReference type="STRING" id="176279.SERP1813"/>
<dbReference type="GeneID" id="50018091"/>
<dbReference type="KEGG" id="ser:SERP1813"/>
<dbReference type="eggNOG" id="COG1841">
    <property type="taxonomic scope" value="Bacteria"/>
</dbReference>
<dbReference type="HOGENOM" id="CLU_131047_2_1_9"/>
<dbReference type="Proteomes" id="UP000000531">
    <property type="component" value="Chromosome"/>
</dbReference>
<dbReference type="GO" id="GO:0022625">
    <property type="term" value="C:cytosolic large ribosomal subunit"/>
    <property type="evidence" value="ECO:0007669"/>
    <property type="project" value="TreeGrafter"/>
</dbReference>
<dbReference type="GO" id="GO:0003735">
    <property type="term" value="F:structural constituent of ribosome"/>
    <property type="evidence" value="ECO:0007669"/>
    <property type="project" value="InterPro"/>
</dbReference>
<dbReference type="GO" id="GO:0006412">
    <property type="term" value="P:translation"/>
    <property type="evidence" value="ECO:0007669"/>
    <property type="project" value="UniProtKB-UniRule"/>
</dbReference>
<dbReference type="CDD" id="cd01658">
    <property type="entry name" value="Ribosomal_L30"/>
    <property type="match status" value="1"/>
</dbReference>
<dbReference type="FunFam" id="3.30.1390.20:FF:000001">
    <property type="entry name" value="50S ribosomal protein L30"/>
    <property type="match status" value="1"/>
</dbReference>
<dbReference type="Gene3D" id="3.30.1390.20">
    <property type="entry name" value="Ribosomal protein L30, ferredoxin-like fold domain"/>
    <property type="match status" value="1"/>
</dbReference>
<dbReference type="HAMAP" id="MF_01371_B">
    <property type="entry name" value="Ribosomal_uL30_B"/>
    <property type="match status" value="1"/>
</dbReference>
<dbReference type="InterPro" id="IPR036919">
    <property type="entry name" value="Ribo_uL30_ferredoxin-like_sf"/>
</dbReference>
<dbReference type="InterPro" id="IPR005996">
    <property type="entry name" value="Ribosomal_uL30_bac-type"/>
</dbReference>
<dbReference type="InterPro" id="IPR016082">
    <property type="entry name" value="Ribosomal_uL30_ferredoxin-like"/>
</dbReference>
<dbReference type="NCBIfam" id="TIGR01308">
    <property type="entry name" value="rpmD_bact"/>
    <property type="match status" value="1"/>
</dbReference>
<dbReference type="PANTHER" id="PTHR15892:SF2">
    <property type="entry name" value="LARGE RIBOSOMAL SUBUNIT PROTEIN UL30M"/>
    <property type="match status" value="1"/>
</dbReference>
<dbReference type="PANTHER" id="PTHR15892">
    <property type="entry name" value="MITOCHONDRIAL RIBOSOMAL PROTEIN L30"/>
    <property type="match status" value="1"/>
</dbReference>
<dbReference type="Pfam" id="PF00327">
    <property type="entry name" value="Ribosomal_L30"/>
    <property type="match status" value="1"/>
</dbReference>
<dbReference type="PIRSF" id="PIRSF002211">
    <property type="entry name" value="Ribosomal_L30_bac-type"/>
    <property type="match status" value="1"/>
</dbReference>
<dbReference type="SUPFAM" id="SSF55129">
    <property type="entry name" value="Ribosomal protein L30p/L7e"/>
    <property type="match status" value="1"/>
</dbReference>
<name>RL30_STAEQ</name>
<keyword id="KW-1185">Reference proteome</keyword>
<keyword id="KW-0687">Ribonucleoprotein</keyword>
<keyword id="KW-0689">Ribosomal protein</keyword>
<protein>
    <recommendedName>
        <fullName evidence="1">Large ribosomal subunit protein uL30</fullName>
    </recommendedName>
    <alternativeName>
        <fullName evidence="2">50S ribosomal protein L30</fullName>
    </alternativeName>
</protein>
<gene>
    <name evidence="1" type="primary">rpmD</name>
    <name type="ordered locus">SERP1813</name>
</gene>
<sequence>MAKLQITLTRSVIGRPETQRKTVEALGLKKTNSSVVVEDNPAIRGQINKVKHLLTIEEEK</sequence>
<reference key="1">
    <citation type="journal article" date="2005" name="J. Bacteriol.">
        <title>Insights on evolution of virulence and resistance from the complete genome analysis of an early methicillin-resistant Staphylococcus aureus strain and a biofilm-producing methicillin-resistant Staphylococcus epidermidis strain.</title>
        <authorList>
            <person name="Gill S.R."/>
            <person name="Fouts D.E."/>
            <person name="Archer G.L."/>
            <person name="Mongodin E.F."/>
            <person name="DeBoy R.T."/>
            <person name="Ravel J."/>
            <person name="Paulsen I.T."/>
            <person name="Kolonay J.F."/>
            <person name="Brinkac L.M."/>
            <person name="Beanan M.J."/>
            <person name="Dodson R.J."/>
            <person name="Daugherty S.C."/>
            <person name="Madupu R."/>
            <person name="Angiuoli S.V."/>
            <person name="Durkin A.S."/>
            <person name="Haft D.H."/>
            <person name="Vamathevan J.J."/>
            <person name="Khouri H."/>
            <person name="Utterback T.R."/>
            <person name="Lee C."/>
            <person name="Dimitrov G."/>
            <person name="Jiang L."/>
            <person name="Qin H."/>
            <person name="Weidman J."/>
            <person name="Tran K."/>
            <person name="Kang K.H."/>
            <person name="Hance I.R."/>
            <person name="Nelson K.E."/>
            <person name="Fraser C.M."/>
        </authorList>
    </citation>
    <scope>NUCLEOTIDE SEQUENCE [LARGE SCALE GENOMIC DNA]</scope>
    <source>
        <strain>ATCC 35984 / DSM 28319 / BCRC 17069 / CCUG 31568 / BM 3577 / RP62A</strain>
    </source>
</reference>
<proteinExistence type="inferred from homology"/>